<gene>
    <name type="primary">ndhG</name>
    <name type="ORF">JNC1300</name>
</gene>
<name>NU6C_JASNU</name>
<sequence>MDLPGPIHDFLLVFLELGLILGSLGVVFLPNPIYSAFSLGLVLFCISLFYILLNSYFVAAAQLLIYVGAINVLIIFAVMFMNGSEYYKDFYLWTVGDGVTSMVCTSLFISLITTIPDTSWYGIIWTTKSNQIIEKDLISNSQQIGIHLVTDFFLPFELISIILLVALIGAIAIARQ</sequence>
<dbReference type="EC" id="7.1.1.-"/>
<dbReference type="EMBL" id="DQ673255">
    <property type="protein sequence ID" value="ABG74682.1"/>
    <property type="molecule type" value="Genomic_DNA"/>
</dbReference>
<dbReference type="RefSeq" id="YP_778544.1">
    <property type="nucleotide sequence ID" value="NC_008407.1"/>
</dbReference>
<dbReference type="SMR" id="Q06R77"/>
<dbReference type="GeneID" id="4319835"/>
<dbReference type="GO" id="GO:0009535">
    <property type="term" value="C:chloroplast thylakoid membrane"/>
    <property type="evidence" value="ECO:0007669"/>
    <property type="project" value="UniProtKB-SubCell"/>
</dbReference>
<dbReference type="GO" id="GO:0008137">
    <property type="term" value="F:NADH dehydrogenase (ubiquinone) activity"/>
    <property type="evidence" value="ECO:0007669"/>
    <property type="project" value="InterPro"/>
</dbReference>
<dbReference type="GO" id="GO:0048038">
    <property type="term" value="F:quinone binding"/>
    <property type="evidence" value="ECO:0007669"/>
    <property type="project" value="UniProtKB-KW"/>
</dbReference>
<dbReference type="FunFam" id="1.20.120.1200:FF:000002">
    <property type="entry name" value="NAD(P)H-quinone oxidoreductase subunit 6, chloroplastic"/>
    <property type="match status" value="1"/>
</dbReference>
<dbReference type="Gene3D" id="1.20.120.1200">
    <property type="entry name" value="NADH-ubiquinone/plastoquinone oxidoreductase chain 6, subunit NuoJ"/>
    <property type="match status" value="1"/>
</dbReference>
<dbReference type="InterPro" id="IPR050290">
    <property type="entry name" value="NAD(P)H-Q_Oxidoreduct_6"/>
</dbReference>
<dbReference type="InterPro" id="IPR001457">
    <property type="entry name" value="NADH_UbQ/plastoQ_OxRdtase_su6"/>
</dbReference>
<dbReference type="InterPro" id="IPR042106">
    <property type="entry name" value="Nuo/plastoQ_OxRdtase_6_NuoJ"/>
</dbReference>
<dbReference type="PANTHER" id="PTHR48479">
    <property type="entry name" value="NAD(P)H-QUINONE OXIDOREDUCTASE SUBUNIT 6, CHLOROPLASTIC"/>
    <property type="match status" value="1"/>
</dbReference>
<dbReference type="PANTHER" id="PTHR48479:SF1">
    <property type="entry name" value="NAD(P)H-QUINONE OXIDOREDUCTASE SUBUNIT 6, CHLOROPLASTIC"/>
    <property type="match status" value="1"/>
</dbReference>
<dbReference type="Pfam" id="PF00499">
    <property type="entry name" value="Oxidored_q3"/>
    <property type="match status" value="1"/>
</dbReference>
<proteinExistence type="inferred from homology"/>
<organism>
    <name type="scientific">Jasminum nudiflorum</name>
    <name type="common">Winter jasmine</name>
    <dbReference type="NCBI Taxonomy" id="126431"/>
    <lineage>
        <taxon>Eukaryota</taxon>
        <taxon>Viridiplantae</taxon>
        <taxon>Streptophyta</taxon>
        <taxon>Embryophyta</taxon>
        <taxon>Tracheophyta</taxon>
        <taxon>Spermatophyta</taxon>
        <taxon>Magnoliopsida</taxon>
        <taxon>eudicotyledons</taxon>
        <taxon>Gunneridae</taxon>
        <taxon>Pentapetalae</taxon>
        <taxon>asterids</taxon>
        <taxon>lamiids</taxon>
        <taxon>Lamiales</taxon>
        <taxon>Oleaceae</taxon>
        <taxon>Jasmineae</taxon>
        <taxon>Jasminum</taxon>
    </lineage>
</organism>
<accession>Q06R77</accession>
<feature type="chain" id="PRO_0000360261" description="NAD(P)H-quinone oxidoreductase subunit 6, chloroplastic">
    <location>
        <begin position="1"/>
        <end position="176"/>
    </location>
</feature>
<feature type="transmembrane region" description="Helical" evidence="2">
    <location>
        <begin position="10"/>
        <end position="30"/>
    </location>
</feature>
<feature type="transmembrane region" description="Helical" evidence="2">
    <location>
        <begin position="33"/>
        <end position="53"/>
    </location>
</feature>
<feature type="transmembrane region" description="Helical" evidence="2">
    <location>
        <begin position="61"/>
        <end position="81"/>
    </location>
</feature>
<feature type="transmembrane region" description="Helical" evidence="2">
    <location>
        <begin position="92"/>
        <end position="112"/>
    </location>
</feature>
<feature type="transmembrane region" description="Helical" evidence="2">
    <location>
        <begin position="153"/>
        <end position="173"/>
    </location>
</feature>
<comment type="function">
    <text evidence="1">NDH shuttles electrons from NAD(P)H:plastoquinone, via FMN and iron-sulfur (Fe-S) centers, to quinones in the photosynthetic chain and possibly in a chloroplast respiratory chain. The immediate electron acceptor for the enzyme in this species is believed to be plastoquinone. Couples the redox reaction to proton translocation, and thus conserves the redox energy in a proton gradient (By similarity).</text>
</comment>
<comment type="catalytic activity">
    <reaction>
        <text>a plastoquinone + NADH + (n+1) H(+)(in) = a plastoquinol + NAD(+) + n H(+)(out)</text>
        <dbReference type="Rhea" id="RHEA:42608"/>
        <dbReference type="Rhea" id="RHEA-COMP:9561"/>
        <dbReference type="Rhea" id="RHEA-COMP:9562"/>
        <dbReference type="ChEBI" id="CHEBI:15378"/>
        <dbReference type="ChEBI" id="CHEBI:17757"/>
        <dbReference type="ChEBI" id="CHEBI:57540"/>
        <dbReference type="ChEBI" id="CHEBI:57945"/>
        <dbReference type="ChEBI" id="CHEBI:62192"/>
    </reaction>
</comment>
<comment type="catalytic activity">
    <reaction>
        <text>a plastoquinone + NADPH + (n+1) H(+)(in) = a plastoquinol + NADP(+) + n H(+)(out)</text>
        <dbReference type="Rhea" id="RHEA:42612"/>
        <dbReference type="Rhea" id="RHEA-COMP:9561"/>
        <dbReference type="Rhea" id="RHEA-COMP:9562"/>
        <dbReference type="ChEBI" id="CHEBI:15378"/>
        <dbReference type="ChEBI" id="CHEBI:17757"/>
        <dbReference type="ChEBI" id="CHEBI:57783"/>
        <dbReference type="ChEBI" id="CHEBI:58349"/>
        <dbReference type="ChEBI" id="CHEBI:62192"/>
    </reaction>
</comment>
<comment type="subunit">
    <text evidence="1">NDH is composed of at least 16 different subunits, 5 of which are encoded in the nucleus.</text>
</comment>
<comment type="subcellular location">
    <subcellularLocation>
        <location evidence="1">Plastid</location>
        <location evidence="1">Chloroplast thylakoid membrane</location>
        <topology evidence="1">Multi-pass membrane protein</topology>
    </subcellularLocation>
</comment>
<comment type="similarity">
    <text evidence="3">Belongs to the complex I subunit 6 family.</text>
</comment>
<evidence type="ECO:0000250" key="1"/>
<evidence type="ECO:0000255" key="2"/>
<evidence type="ECO:0000305" key="3"/>
<reference key="1">
    <citation type="journal article" date="2007" name="Mol. Biol. Evol.">
        <title>Gene relocations within chloroplast genomes of Jasminum and Menodora (Oleaceae) are due to multiple, overlapping inversions.</title>
        <authorList>
            <person name="Lee H.-L."/>
            <person name="Jansen R.K."/>
            <person name="Chumley T.W."/>
            <person name="Kim K.-J."/>
        </authorList>
    </citation>
    <scope>NUCLEOTIDE SEQUENCE [LARGE SCALE GENOMIC DNA]</scope>
</reference>
<geneLocation type="chloroplast"/>
<keyword id="KW-0150">Chloroplast</keyword>
<keyword id="KW-0472">Membrane</keyword>
<keyword id="KW-0520">NAD</keyword>
<keyword id="KW-0521">NADP</keyword>
<keyword id="KW-0934">Plastid</keyword>
<keyword id="KW-0618">Plastoquinone</keyword>
<keyword id="KW-0874">Quinone</keyword>
<keyword id="KW-0793">Thylakoid</keyword>
<keyword id="KW-1278">Translocase</keyword>
<keyword id="KW-0812">Transmembrane</keyword>
<keyword id="KW-1133">Transmembrane helix</keyword>
<keyword id="KW-0813">Transport</keyword>
<protein>
    <recommendedName>
        <fullName>NAD(P)H-quinone oxidoreductase subunit 6, chloroplastic</fullName>
        <ecNumber>7.1.1.-</ecNumber>
    </recommendedName>
    <alternativeName>
        <fullName>NAD(P)H dehydrogenase subunit 6</fullName>
    </alternativeName>
    <alternativeName>
        <fullName>NADH-plastoquinone oxidoreductase subunit 6</fullName>
    </alternativeName>
</protein>